<feature type="chain" id="PRO_0000438772" description="Uridine 5'-monophosphate synthase" evidence="7">
    <location>
        <begin position="1"/>
        <end position="497"/>
    </location>
</feature>
<feature type="region of interest" description="OPRTase" evidence="1">
    <location>
        <begin position="8"/>
        <end position="226"/>
    </location>
</feature>
<feature type="region of interest" description="Domain linker" evidence="1">
    <location>
        <begin position="227"/>
        <end position="232"/>
    </location>
</feature>
<feature type="region of interest" description="OMPdecase" evidence="1">
    <location>
        <begin position="233"/>
        <end position="496"/>
    </location>
</feature>
<feature type="active site" description="For OMPdecase activity" evidence="1">
    <location>
        <position position="324"/>
    </location>
</feature>
<feature type="active site" description="For OMPdecase activity" evidence="1">
    <location>
        <position position="326"/>
    </location>
</feature>
<feature type="active site" description="For OMPdecase activity" evidence="1">
    <location>
        <position position="329"/>
    </location>
</feature>
<feature type="binding site" evidence="1">
    <location>
        <position position="271"/>
    </location>
    <ligand>
        <name>UMP</name>
        <dbReference type="ChEBI" id="CHEBI:57865"/>
    </ligand>
</feature>
<feature type="binding site" evidence="1">
    <location>
        <begin position="293"/>
        <end position="295"/>
    </location>
    <ligand>
        <name>UMP</name>
        <dbReference type="ChEBI" id="CHEBI:57865"/>
    </ligand>
</feature>
<feature type="binding site" evidence="1">
    <location>
        <position position="293"/>
    </location>
    <ligand>
        <name>orotidine 5'-phosphate</name>
        <dbReference type="ChEBI" id="CHEBI:57538"/>
    </ligand>
</feature>
<feature type="binding site" evidence="1">
    <location>
        <position position="326"/>
    </location>
    <ligand>
        <name>orotidine 5'-phosphate</name>
        <dbReference type="ChEBI" id="CHEBI:57538"/>
    </ligand>
</feature>
<feature type="binding site" evidence="1">
    <location>
        <position position="329"/>
    </location>
    <ligand>
        <name>orotidine 5'-phosphate</name>
        <dbReference type="ChEBI" id="CHEBI:57538"/>
    </ligand>
</feature>
<feature type="binding site" evidence="1">
    <location>
        <position position="329"/>
    </location>
    <ligand>
        <name>UMP</name>
        <dbReference type="ChEBI" id="CHEBI:57865"/>
    </ligand>
</feature>
<feature type="binding site" evidence="1">
    <location>
        <position position="333"/>
    </location>
    <ligand>
        <name>orotidine 5'-phosphate</name>
        <dbReference type="ChEBI" id="CHEBI:57538"/>
    </ligand>
</feature>
<feature type="binding site" evidence="1">
    <location>
        <position position="333"/>
    </location>
    <ligand>
        <name>UMP</name>
        <dbReference type="ChEBI" id="CHEBI:57865"/>
    </ligand>
</feature>
<feature type="binding site" evidence="1">
    <location>
        <position position="387"/>
    </location>
    <ligand>
        <name>orotidine 5'-phosphate</name>
        <dbReference type="ChEBI" id="CHEBI:57538"/>
    </ligand>
</feature>
<feature type="binding site" evidence="1">
    <location>
        <position position="387"/>
    </location>
    <ligand>
        <name>UMP</name>
        <dbReference type="ChEBI" id="CHEBI:57865"/>
    </ligand>
</feature>
<feature type="binding site" evidence="1">
    <location>
        <begin position="446"/>
        <end position="448"/>
    </location>
    <ligand>
        <name>orotidine 5'-phosphate</name>
        <dbReference type="ChEBI" id="CHEBI:57538"/>
    </ligand>
</feature>
<feature type="binding site" evidence="1">
    <location>
        <begin position="446"/>
        <end position="448"/>
    </location>
    <ligand>
        <name>UMP</name>
        <dbReference type="ChEBI" id="CHEBI:57865"/>
    </ligand>
</feature>
<feature type="binding site" evidence="1">
    <location>
        <begin position="466"/>
        <end position="467"/>
    </location>
    <ligand>
        <name>orotidine 5'-phosphate</name>
        <dbReference type="ChEBI" id="CHEBI:57538"/>
    </ligand>
</feature>
<feature type="binding site" evidence="1">
    <location>
        <begin position="466"/>
        <end position="467"/>
    </location>
    <ligand>
        <name>UMP</name>
        <dbReference type="ChEBI" id="CHEBI:57865"/>
    </ligand>
</feature>
<organism evidence="8">
    <name type="scientific">Caenorhabditis elegans</name>
    <dbReference type="NCBI Taxonomy" id="6239"/>
    <lineage>
        <taxon>Eukaryota</taxon>
        <taxon>Metazoa</taxon>
        <taxon>Ecdysozoa</taxon>
        <taxon>Nematoda</taxon>
        <taxon>Chromadorea</taxon>
        <taxon>Rhabditida</taxon>
        <taxon>Rhabditina</taxon>
        <taxon>Rhabditomorpha</taxon>
        <taxon>Rhabditoidea</taxon>
        <taxon>Rhabditidae</taxon>
        <taxon>Peloderinae</taxon>
        <taxon>Caenorhabditis</taxon>
    </lineage>
</organism>
<gene>
    <name evidence="9" type="primary">umps-1</name>
    <name evidence="6" type="synonym">rad-6</name>
    <name evidence="9" type="ORF">T07C4.1</name>
</gene>
<sequence>MSSLTDKTRNGALKRNLLRQMLKASVFKFGEFQLKSGQISPIYIDLRECFGHPGLLMLISEAISKQVEISEVQYAGVLGIPYAALPYASVAAGNYLKKPLLIVRKEAKSYGTKKLIEGLYQPNDRLILIEDVVTTGGSILDVVKVLHTENLVASDVFCILDREQGGRQKLQDAGVTLHSLLDMQTVLTFLYSTGAIGDEQWHGIVQALNLPYTSPTKLEINSELENLSSLPYVENVRTPLAERESLTESALIKKILGIMRRKKSNLCLAVDYTTVEQCLQMIELAGPFVLAIKLHADAITDFNEEFTRKLTTMANDMDFIIFEDRKFGDTGNTNLLQLTGAQKIANWADVVTVHAVQGSDSIAGVFRKLAKDPTYRLSGVLLIAQLSTKGSLTALEGYTETAVKIANENRDVISGFITQTRVSACSDLLNWTPGVNLDAKSDSAGQQWRGVDEAIEVQQNDIIIVGRGVTSSSEPVQQLKRYRQIAWDALTRSDDSI</sequence>
<evidence type="ECO:0000250" key="1">
    <source>
        <dbReference type="UniProtKB" id="P11172"/>
    </source>
</evidence>
<evidence type="ECO:0000269" key="2">
    <source>
    </source>
</evidence>
<evidence type="ECO:0000269" key="3">
    <source>
    </source>
</evidence>
<evidence type="ECO:0000269" key="4">
    <source>
    </source>
</evidence>
<evidence type="ECO:0000303" key="5">
    <source>
    </source>
</evidence>
<evidence type="ECO:0000303" key="6">
    <source>
    </source>
</evidence>
<evidence type="ECO:0000305" key="7"/>
<evidence type="ECO:0000312" key="8">
    <source>
        <dbReference type="Proteomes" id="UP000001940"/>
    </source>
</evidence>
<evidence type="ECO:0000312" key="9">
    <source>
        <dbReference type="WormBase" id="T07C4.1"/>
    </source>
</evidence>
<protein>
    <recommendedName>
        <fullName evidence="1">Uridine 5'-monophosphate synthase</fullName>
        <shortName evidence="1">UMP synthase</shortName>
    </recommendedName>
    <domain>
        <recommendedName>
            <fullName evidence="5">Orotate phosphoribosyltransferase</fullName>
            <shortName evidence="5">OPRT</shortName>
            <shortName evidence="5">OPRTase</shortName>
            <ecNumber evidence="2">2.4.2.10</ecNumber>
        </recommendedName>
    </domain>
    <domain>
        <recommendedName>
            <fullName evidence="5">Orotidine 5'-phosphate decarboxylase</fullName>
            <shortName evidence="5">ODC</shortName>
            <shortName evidence="6">ODCase</shortName>
            <ecNumber evidence="2">4.1.1.23</ecNumber>
        </recommendedName>
    </domain>
</protein>
<comment type="function">
    <text evidence="2 3 4">Bifunctional enzyme which catalyzes the formation of UMP from orotate in the de novo pathway of pyrimidine biosynthesis (PubMed:19645718). May also form UMP from uracil (PubMed:19645718). Regulates the size of gut granules during embryonic development (PubMed:20148972). Involved in resistance to DNA damaging agents including UV-C and X-ray radiation (PubMed:24262006).</text>
</comment>
<comment type="catalytic activity">
    <reaction evidence="2">
        <text>orotidine 5'-phosphate + diphosphate = orotate + 5-phospho-alpha-D-ribose 1-diphosphate</text>
        <dbReference type="Rhea" id="RHEA:10380"/>
        <dbReference type="ChEBI" id="CHEBI:30839"/>
        <dbReference type="ChEBI" id="CHEBI:33019"/>
        <dbReference type="ChEBI" id="CHEBI:57538"/>
        <dbReference type="ChEBI" id="CHEBI:58017"/>
        <dbReference type="EC" id="2.4.2.10"/>
    </reaction>
</comment>
<comment type="catalytic activity">
    <reaction evidence="2">
        <text>orotidine 5'-phosphate + H(+) = UMP + CO2</text>
        <dbReference type="Rhea" id="RHEA:11596"/>
        <dbReference type="ChEBI" id="CHEBI:15378"/>
        <dbReference type="ChEBI" id="CHEBI:16526"/>
        <dbReference type="ChEBI" id="CHEBI:57538"/>
        <dbReference type="ChEBI" id="CHEBI:57865"/>
        <dbReference type="EC" id="4.1.1.23"/>
    </reaction>
</comment>
<comment type="pathway">
    <text evidence="2">Pyrimidine metabolism; UMP biosynthesis via de novo pathway; UMP from orotate: step 1/2.</text>
</comment>
<comment type="pathway">
    <text evidence="2">Pyrimidine metabolism; UMP biosynthesis via de novo pathway; UMP from orotate: step 2/2.</text>
</comment>
<comment type="subcellular location">
    <subcellularLocation>
        <location evidence="3">Cytoplasm</location>
    </subcellularLocation>
    <text evidence="3">Localizes near the apical surface of the embryonic intestine. Appears not to localize to gut granules.</text>
</comment>
<comment type="tissue specificity">
    <text evidence="2 3">Expressed in intestine and in neurons near the nerve ring and rectum.</text>
</comment>
<comment type="developmental stage">
    <text evidence="3">Expression starts at the early embryonic pretzel-stage in the intestine and in a few cells in the head and the tail, and continues throughout larval stages and adulthood.</text>
</comment>
<comment type="disruption phenotype">
    <text evidence="2 3 4">56 percent of embryos fail to hatch and are arrested at various stages between the bean stage and the four-fold stage (PubMed:20148972). 30 percent of L1 larvae fail to reach adulthood (PubMed:20148972). Embryos from the bean stage through to hatching have abnormally enlarged gut granules which fail to acidify (PubMed:20148972). Their size and number decreases at the L1 larval stage (PubMed:20148972). Normal gut granules in L2 larvae and adults (PubMed:20148972). Lysosomes in intestinal cells are mislocalized. 7 percent of embryos lack attachment of the anterior pharynx to the buccal cavity (PubMed:20148972). Exposure to hypertonic conditions reduces the number of vacuoles in mutant larvae (PubMed:20148972). Resistance to 5-fluorouracil (5-FU)-mediated toxicity (PubMed:19645718, PubMed:24262006).</text>
</comment>
<comment type="similarity">
    <text evidence="7">In the N-terminal section; belongs to the purine/pyrimidine phosphoribosyltransferase family.</text>
</comment>
<comment type="similarity">
    <text evidence="7">In the C-terminal section; belongs to the OMP decarboxylase family.</text>
</comment>
<reference evidence="8" key="1">
    <citation type="journal article" date="1998" name="Science">
        <title>Genome sequence of the nematode C. elegans: a platform for investigating biology.</title>
        <authorList>
            <consortium name="The C. elegans sequencing consortium"/>
        </authorList>
    </citation>
    <scope>NUCLEOTIDE SEQUENCE [LARGE SCALE GENOMIC DNA]</scope>
    <source>
        <strain evidence="8">Bristol N2</strain>
    </source>
</reference>
<reference evidence="7" key="2">
    <citation type="journal article" date="2009" name="FEBS J.">
        <title>Functional analysis of pyrimidine biosynthesis enzymes using the anticancer drug 5-fluorouracil in Caenorhabditis elegans.</title>
        <authorList>
            <person name="Kim S."/>
            <person name="Park D.H."/>
            <person name="Kim T.H."/>
            <person name="Hwang M."/>
            <person name="Shim J."/>
        </authorList>
    </citation>
    <scope>CATALYTIC ACTIVITY</scope>
    <scope>PATHWAY</scope>
    <scope>TISSUE SPECIFICITY</scope>
    <scope>DISRUPTION PHENOTYPE</scope>
</reference>
<reference evidence="7" key="3">
    <citation type="journal article" date="2010" name="FEBS J.">
        <title>A Caenorhabditis elegans model of orotic aciduria reveals enlarged lysosome-related organelles in embryos lacking umps-1 function.</title>
        <authorList>
            <person name="Levitte S."/>
            <person name="Salesky R."/>
            <person name="King B."/>
            <person name="Coe Smith S."/>
            <person name="Depper M."/>
            <person name="Cole M."/>
            <person name="Hermann G.J."/>
        </authorList>
    </citation>
    <scope>FUNCTION</scope>
    <scope>TISSUE SPECIFICITY</scope>
    <scope>DEVELOPMENTAL STAGE</scope>
    <scope>DISRUPTION PHENOTYPE</scope>
</reference>
<reference evidence="7" key="4">
    <citation type="journal article" date="2014" name="Biochem. J.">
        <title>RAD-6: pyrimidine synthesis and radiation sensitivity in Caenorhabditis elegans.</title>
        <authorList>
            <person name="Merry A."/>
            <person name="Qiao M."/>
            <person name="Hasler M."/>
            <person name="Kuwabara P.E."/>
        </authorList>
    </citation>
    <scope>FUNCTION</scope>
    <scope>DISRUPTION PHENOTYPE</scope>
</reference>
<name>UMPS_CAEEL</name>
<dbReference type="EC" id="2.4.2.10" evidence="2"/>
<dbReference type="EC" id="4.1.1.23" evidence="2"/>
<dbReference type="EMBL" id="BX284603">
    <property type="protein sequence ID" value="CAA82579.1"/>
    <property type="molecule type" value="Genomic_DNA"/>
</dbReference>
<dbReference type="PIR" id="S41014">
    <property type="entry name" value="S41014"/>
</dbReference>
<dbReference type="RefSeq" id="NP_499291.1">
    <property type="nucleotide sequence ID" value="NM_066890.6"/>
</dbReference>
<dbReference type="SMR" id="G5EDZ2"/>
<dbReference type="FunCoup" id="G5EDZ2">
    <property type="interactions" value="2941"/>
</dbReference>
<dbReference type="IntAct" id="G5EDZ2">
    <property type="interactions" value="13"/>
</dbReference>
<dbReference type="MINT" id="G5EDZ2"/>
<dbReference type="STRING" id="6239.T07C4.1.2"/>
<dbReference type="PaxDb" id="6239-T07C4.1.1"/>
<dbReference type="PeptideAtlas" id="G5EDZ2"/>
<dbReference type="EnsemblMetazoa" id="T07C4.1.1">
    <property type="protein sequence ID" value="T07C4.1.1"/>
    <property type="gene ID" value="WBGene00011559"/>
</dbReference>
<dbReference type="GeneID" id="176453"/>
<dbReference type="KEGG" id="cel:CELE_T07C4.1"/>
<dbReference type="AGR" id="WB:WBGene00011559"/>
<dbReference type="CTD" id="176453"/>
<dbReference type="WormBase" id="T07C4.1">
    <property type="protein sequence ID" value="CE00638"/>
    <property type="gene ID" value="WBGene00011559"/>
    <property type="gene designation" value="umps-1"/>
</dbReference>
<dbReference type="eggNOG" id="KOG1377">
    <property type="taxonomic scope" value="Eukaryota"/>
</dbReference>
<dbReference type="GeneTree" id="ENSGT00390000001856"/>
<dbReference type="HOGENOM" id="CLU_049275_1_0_1"/>
<dbReference type="InParanoid" id="G5EDZ2"/>
<dbReference type="OMA" id="SAKHVCG"/>
<dbReference type="OrthoDB" id="10263753at2759"/>
<dbReference type="PhylomeDB" id="G5EDZ2"/>
<dbReference type="Reactome" id="R-CEL-500753">
    <property type="pathway name" value="Pyrimidine biosynthesis"/>
</dbReference>
<dbReference type="UniPathway" id="UPA00070">
    <property type="reaction ID" value="UER00119"/>
</dbReference>
<dbReference type="UniPathway" id="UPA00070">
    <property type="reaction ID" value="UER00120"/>
</dbReference>
<dbReference type="PRO" id="PR:G5EDZ2"/>
<dbReference type="Proteomes" id="UP000001940">
    <property type="component" value="Chromosome III"/>
</dbReference>
<dbReference type="Bgee" id="WBGene00011559">
    <property type="expression patterns" value="Expressed in germ line (C elegans) and 4 other cell types or tissues"/>
</dbReference>
<dbReference type="GO" id="GO:0005737">
    <property type="term" value="C:cytoplasm"/>
    <property type="evidence" value="ECO:0000314"/>
    <property type="project" value="WormBase"/>
</dbReference>
<dbReference type="GO" id="GO:0004588">
    <property type="term" value="F:orotate phosphoribosyltransferase activity"/>
    <property type="evidence" value="ECO:0000314"/>
    <property type="project" value="WormBase"/>
</dbReference>
<dbReference type="GO" id="GO:0004590">
    <property type="term" value="F:orotidine-5'-phosphate decarboxylase activity"/>
    <property type="evidence" value="ECO:0000314"/>
    <property type="project" value="WormBase"/>
</dbReference>
<dbReference type="GO" id="GO:0006207">
    <property type="term" value="P:'de novo' pyrimidine nucleobase biosynthetic process"/>
    <property type="evidence" value="ECO:0007669"/>
    <property type="project" value="InterPro"/>
</dbReference>
<dbReference type="GO" id="GO:0044205">
    <property type="term" value="P:'de novo' UMP biosynthetic process"/>
    <property type="evidence" value="ECO:0007669"/>
    <property type="project" value="UniProtKB-UniPathway"/>
</dbReference>
<dbReference type="GO" id="GO:0008340">
    <property type="term" value="P:determination of adult lifespan"/>
    <property type="evidence" value="ECO:0000315"/>
    <property type="project" value="UniProtKB"/>
</dbReference>
<dbReference type="GO" id="GO:0009792">
    <property type="term" value="P:embryo development ending in birth or egg hatching"/>
    <property type="evidence" value="ECO:0000315"/>
    <property type="project" value="UniProtKB"/>
</dbReference>
<dbReference type="GO" id="GO:0048557">
    <property type="term" value="P:embryonic digestive tract morphogenesis"/>
    <property type="evidence" value="ECO:0000315"/>
    <property type="project" value="UniProtKB"/>
</dbReference>
<dbReference type="GO" id="GO:0007040">
    <property type="term" value="P:lysosome organization"/>
    <property type="evidence" value="ECO:0000315"/>
    <property type="project" value="WormBase"/>
</dbReference>
<dbReference type="GO" id="GO:0002119">
    <property type="term" value="P:nematode larval development"/>
    <property type="evidence" value="ECO:0000315"/>
    <property type="project" value="UniProtKB"/>
</dbReference>
<dbReference type="GO" id="GO:0090727">
    <property type="term" value="P:positive regulation of brood size"/>
    <property type="evidence" value="ECO:0000315"/>
    <property type="project" value="UniProtKB"/>
</dbReference>
<dbReference type="GO" id="GO:0040018">
    <property type="term" value="P:positive regulation of multicellular organism growth"/>
    <property type="evidence" value="ECO:0000315"/>
    <property type="project" value="UniProtKB"/>
</dbReference>
<dbReference type="GO" id="GO:0019856">
    <property type="term" value="P:pyrimidine nucleobase biosynthetic process"/>
    <property type="evidence" value="ECO:0000314"/>
    <property type="project" value="WormBase"/>
</dbReference>
<dbReference type="GO" id="GO:0010332">
    <property type="term" value="P:response to gamma radiation"/>
    <property type="evidence" value="ECO:0000315"/>
    <property type="project" value="UniProtKB"/>
</dbReference>
<dbReference type="GO" id="GO:0009411">
    <property type="term" value="P:response to UV"/>
    <property type="evidence" value="ECO:0000315"/>
    <property type="project" value="WormBase"/>
</dbReference>
<dbReference type="GO" id="GO:0010225">
    <property type="term" value="P:response to UV-C"/>
    <property type="evidence" value="ECO:0000315"/>
    <property type="project" value="UniProtKB"/>
</dbReference>
<dbReference type="GO" id="GO:0010165">
    <property type="term" value="P:response to X-ray"/>
    <property type="evidence" value="ECO:0000315"/>
    <property type="project" value="UniProtKB"/>
</dbReference>
<dbReference type="GO" id="GO:0006222">
    <property type="term" value="P:UMP biosynthetic process"/>
    <property type="evidence" value="ECO:0000315"/>
    <property type="project" value="WormBase"/>
</dbReference>
<dbReference type="CDD" id="cd04725">
    <property type="entry name" value="OMP_decarboxylase_like"/>
    <property type="match status" value="1"/>
</dbReference>
<dbReference type="CDD" id="cd06223">
    <property type="entry name" value="PRTases_typeI"/>
    <property type="match status" value="1"/>
</dbReference>
<dbReference type="FunFam" id="3.20.20.70:FF:000114">
    <property type="entry name" value="Decarboxylase,orotidine phosphate"/>
    <property type="match status" value="1"/>
</dbReference>
<dbReference type="FunFam" id="3.40.50.2020:FF:000025">
    <property type="entry name" value="Uridine monophosphate synthetase"/>
    <property type="match status" value="1"/>
</dbReference>
<dbReference type="Gene3D" id="3.40.50.2020">
    <property type="match status" value="1"/>
</dbReference>
<dbReference type="Gene3D" id="3.20.20.70">
    <property type="entry name" value="Aldolase class I"/>
    <property type="match status" value="1"/>
</dbReference>
<dbReference type="HAMAP" id="MF_01208">
    <property type="entry name" value="PyrE"/>
    <property type="match status" value="1"/>
</dbReference>
<dbReference type="InterPro" id="IPR013785">
    <property type="entry name" value="Aldolase_TIM"/>
</dbReference>
<dbReference type="InterPro" id="IPR014732">
    <property type="entry name" value="OMPdecase"/>
</dbReference>
<dbReference type="InterPro" id="IPR001754">
    <property type="entry name" value="OMPdeCOase_dom"/>
</dbReference>
<dbReference type="InterPro" id="IPR023031">
    <property type="entry name" value="OPRT"/>
</dbReference>
<dbReference type="InterPro" id="IPR004467">
    <property type="entry name" value="Or_phspho_trans_dom"/>
</dbReference>
<dbReference type="InterPro" id="IPR000836">
    <property type="entry name" value="PRibTrfase_dom"/>
</dbReference>
<dbReference type="InterPro" id="IPR029057">
    <property type="entry name" value="PRTase-like"/>
</dbReference>
<dbReference type="InterPro" id="IPR011060">
    <property type="entry name" value="RibuloseP-bd_barrel"/>
</dbReference>
<dbReference type="NCBIfam" id="TIGR00336">
    <property type="entry name" value="pyrE"/>
    <property type="match status" value="1"/>
</dbReference>
<dbReference type="NCBIfam" id="TIGR01740">
    <property type="entry name" value="pyrF"/>
    <property type="match status" value="1"/>
</dbReference>
<dbReference type="PANTHER" id="PTHR19278">
    <property type="entry name" value="OROTATE PHOSPHORIBOSYLTRANSFERASE"/>
    <property type="match status" value="1"/>
</dbReference>
<dbReference type="PANTHER" id="PTHR19278:SF9">
    <property type="entry name" value="URIDINE 5'-MONOPHOSPHATE SYNTHASE"/>
    <property type="match status" value="1"/>
</dbReference>
<dbReference type="Pfam" id="PF00215">
    <property type="entry name" value="OMPdecase"/>
    <property type="match status" value="1"/>
</dbReference>
<dbReference type="SMART" id="SM00934">
    <property type="entry name" value="OMPdecase"/>
    <property type="match status" value="1"/>
</dbReference>
<dbReference type="SUPFAM" id="SSF53271">
    <property type="entry name" value="PRTase-like"/>
    <property type="match status" value="1"/>
</dbReference>
<dbReference type="SUPFAM" id="SSF51366">
    <property type="entry name" value="Ribulose-phoshate binding barrel"/>
    <property type="match status" value="1"/>
</dbReference>
<dbReference type="PROSITE" id="PS00103">
    <property type="entry name" value="PUR_PYR_PR_TRANSFER"/>
    <property type="match status" value="1"/>
</dbReference>
<keyword id="KW-0963">Cytoplasm</keyword>
<keyword id="KW-0210">Decarboxylase</keyword>
<keyword id="KW-0328">Glycosyltransferase</keyword>
<keyword id="KW-0456">Lyase</keyword>
<keyword id="KW-0511">Multifunctional enzyme</keyword>
<keyword id="KW-0665">Pyrimidine biosynthesis</keyword>
<keyword id="KW-1185">Reference proteome</keyword>
<keyword id="KW-0808">Transferase</keyword>
<proteinExistence type="evidence at protein level"/>
<accession>G5EDZ2</accession>